<keyword id="KW-0204">Cytolysis</keyword>
<keyword id="KW-1061">Dermonecrotic toxin</keyword>
<keyword id="KW-1015">Disulfide bond</keyword>
<keyword id="KW-0325">Glycoprotein</keyword>
<keyword id="KW-0354">Hemolysis</keyword>
<keyword id="KW-0442">Lipid degradation</keyword>
<keyword id="KW-0443">Lipid metabolism</keyword>
<keyword id="KW-0456">Lyase</keyword>
<keyword id="KW-0460">Magnesium</keyword>
<keyword id="KW-0479">Metal-binding</keyword>
<keyword id="KW-0964">Secreted</keyword>
<keyword id="KW-0800">Toxin</keyword>
<reference key="1">
    <citation type="journal article" date="2009" name="Mol. Biol. Evol.">
        <title>Molecular evolution, functional variation, and proposed nomenclature of the gene family that includes sphingomyelinase D in sicariid spider venoms.</title>
        <authorList>
            <person name="Binford G.J."/>
            <person name="Bodner M.R."/>
            <person name="Cordes M.H."/>
            <person name="Baldwin K.L."/>
            <person name="Rynerson M.R."/>
            <person name="Burns S.N."/>
            <person name="Zobel-Thropp P.A."/>
        </authorList>
    </citation>
    <scope>NUCLEOTIDE SEQUENCE [MRNA]</scope>
    <scope>NOMENCLATURE</scope>
    <source>
        <tissue>Venom gland</tissue>
    </source>
</reference>
<organism>
    <name type="scientific">Loxosceles apachea</name>
    <name type="common">Apache recluse spider</name>
    <dbReference type="NCBI Taxonomy" id="571518"/>
    <lineage>
        <taxon>Eukaryota</taxon>
        <taxon>Metazoa</taxon>
        <taxon>Ecdysozoa</taxon>
        <taxon>Arthropoda</taxon>
        <taxon>Chelicerata</taxon>
        <taxon>Arachnida</taxon>
        <taxon>Araneae</taxon>
        <taxon>Araneomorphae</taxon>
        <taxon>Haplogynae</taxon>
        <taxon>Scytodoidea</taxon>
        <taxon>Sicariidae</taxon>
        <taxon>Loxosceles</taxon>
    </lineage>
</organism>
<protein>
    <recommendedName>
        <fullName evidence="7">Dermonecrotic toxin LapSicTox-alphaIB1b2</fullName>
        <ecNumber evidence="4">4.6.1.-</ecNumber>
    </recommendedName>
    <alternativeName>
        <fullName>Phospholipase D</fullName>
        <shortName>PLD</shortName>
    </alternativeName>
    <alternativeName>
        <fullName>Sphingomyelin phosphodiesterase D</fullName>
        <shortName>SMD</shortName>
        <shortName>SMase D</shortName>
        <shortName>Sphingomyelinase D</shortName>
    </alternativeName>
</protein>
<evidence type="ECO:0000250" key="1">
    <source>
        <dbReference type="UniProtKB" id="A0A0D4WTV1"/>
    </source>
</evidence>
<evidence type="ECO:0000250" key="2">
    <source>
        <dbReference type="UniProtKB" id="A0A0D4WV12"/>
    </source>
</evidence>
<evidence type="ECO:0000250" key="3">
    <source>
        <dbReference type="UniProtKB" id="P0CE80"/>
    </source>
</evidence>
<evidence type="ECO:0000250" key="4">
    <source>
        <dbReference type="UniProtKB" id="Q4ZFU2"/>
    </source>
</evidence>
<evidence type="ECO:0000250" key="5">
    <source>
        <dbReference type="UniProtKB" id="Q8I914"/>
    </source>
</evidence>
<evidence type="ECO:0000255" key="6"/>
<evidence type="ECO:0000303" key="7">
    <source>
    </source>
</evidence>
<evidence type="ECO:0000305" key="8"/>
<evidence type="ECO:0000305" key="9">
    <source>
    </source>
</evidence>
<comment type="function">
    <text evidence="1 3">Dermonecrotic toxins cleave the phosphodiester linkage between the phosphate and headgroup of certain phospholipids (sphingolipid and lysolipid substrates), forming an alcohol (often choline) and a cyclic phosphate (By similarity). This toxin acts on sphingomyelin (SM) (By similarity). It may also act on ceramide phosphoethanolamine (CPE), lysophosphatidylcholine (LPC) and lysophosphatidylethanolamine (LPE), but not on lysophosphatidylserine (LPS), and lysophosphatidylglycerol (LPG) (By similarity). It acts by transphosphatidylation, releasing exclusively cyclic phosphate products as second products (By similarity). Induces dermonecrosis, hemolysis, increased vascular permeability, edema, inflammatory response, and platelet aggregation (By similarity).</text>
</comment>
<comment type="catalytic activity">
    <reaction evidence="1">
        <text>an N-(acyl)-sphingosylphosphocholine = an N-(acyl)-sphingosyl-1,3-cyclic phosphate + choline</text>
        <dbReference type="Rhea" id="RHEA:60652"/>
        <dbReference type="ChEBI" id="CHEBI:15354"/>
        <dbReference type="ChEBI" id="CHEBI:64583"/>
        <dbReference type="ChEBI" id="CHEBI:143892"/>
    </reaction>
</comment>
<comment type="catalytic activity">
    <reaction evidence="1">
        <text>an N-(acyl)-sphingosylphosphoethanolamine = an N-(acyl)-sphingosyl-1,3-cyclic phosphate + ethanolamine</text>
        <dbReference type="Rhea" id="RHEA:60648"/>
        <dbReference type="ChEBI" id="CHEBI:57603"/>
        <dbReference type="ChEBI" id="CHEBI:143891"/>
        <dbReference type="ChEBI" id="CHEBI:143892"/>
    </reaction>
</comment>
<comment type="catalytic activity">
    <reaction evidence="1">
        <text>a 1-acyl-sn-glycero-3-phosphocholine = a 1-acyl-sn-glycero-2,3-cyclic phosphate + choline</text>
        <dbReference type="Rhea" id="RHEA:60700"/>
        <dbReference type="ChEBI" id="CHEBI:15354"/>
        <dbReference type="ChEBI" id="CHEBI:58168"/>
        <dbReference type="ChEBI" id="CHEBI:143947"/>
    </reaction>
</comment>
<comment type="catalytic activity">
    <reaction evidence="1">
        <text>a 1-acyl-sn-glycero-3-phosphoethanolamine = a 1-acyl-sn-glycero-2,3-cyclic phosphate + ethanolamine</text>
        <dbReference type="Rhea" id="RHEA:60704"/>
        <dbReference type="ChEBI" id="CHEBI:57603"/>
        <dbReference type="ChEBI" id="CHEBI:64381"/>
        <dbReference type="ChEBI" id="CHEBI:143947"/>
    </reaction>
</comment>
<comment type="cofactor">
    <cofactor evidence="5">
        <name>Mg(2+)</name>
        <dbReference type="ChEBI" id="CHEBI:18420"/>
    </cofactor>
    <text evidence="5">Binds 1 Mg(2+) ion per subunit.</text>
</comment>
<comment type="subcellular location">
    <subcellularLocation>
        <location evidence="9">Secreted</location>
    </subcellularLocation>
</comment>
<comment type="tissue specificity">
    <text evidence="9">Expressed by the venom gland.</text>
</comment>
<comment type="similarity">
    <text evidence="8">Belongs to the arthropod phospholipase D family. Class II subfamily.</text>
</comment>
<comment type="caution">
    <text evidence="1 2 4">The most common activity assay for dermonecrotic toxins detects enzymatic activity by monitoring choline release from substrate. Liberation of choline from sphingomyelin (SM) or lysophosphatidylcholine (LPC) is commonly assumed to result from substrate hydrolysis, giving either ceramide-1-phosphate (C1P) or lysophosphatidic acid (LPA), respectively, as a second product. However, two studies from Lajoie and colleagues (2013 and 2015) report the observation of exclusive formation of cyclic phosphate products as second products, resulting from intramolecular transphosphatidylation. Cyclic phosphates have vastly different biological properties from their monoester counterparts, and they may be relevant to the pathology of brown spider envenomation.</text>
</comment>
<sequence length="273" mass="30448">WIMGHMVNAIAQIDEFVNLGANSIETDVSFDSSANPEYTYHGIPCDCGRTCTKWEHFNEFLKGLRKATTPGDSKYHEKLVLVVFDLKTGSLYDNQASDAGKKLAKSLLQNYWNNGNNGGRAYIVLSIPNLAHYKLITGFKEALTSEGHPELMDKVGYDFSGNDDIGDVANAYKKAGVTGHVWQSDGITNCLLRGLDRVRKAVANRDSSNGYINKVYYWTVDKRQSTRDALDAGVDGIMTNYPDVIADVLNESAYKAKFRIASYDDNPWETFKN</sequence>
<proteinExistence type="evidence at transcript level"/>
<dbReference type="EC" id="4.6.1.-" evidence="4"/>
<dbReference type="EMBL" id="FJ171394">
    <property type="protein sequence ID" value="ACN48890.1"/>
    <property type="molecule type" value="mRNA"/>
</dbReference>
<dbReference type="EMBL" id="FJ171396">
    <property type="protein sequence ID" value="ACN48892.1"/>
    <property type="molecule type" value="mRNA"/>
</dbReference>
<dbReference type="SMR" id="C0JAV9"/>
<dbReference type="GO" id="GO:0005576">
    <property type="term" value="C:extracellular region"/>
    <property type="evidence" value="ECO:0007669"/>
    <property type="project" value="UniProtKB-SubCell"/>
</dbReference>
<dbReference type="GO" id="GO:0016829">
    <property type="term" value="F:lyase activity"/>
    <property type="evidence" value="ECO:0007669"/>
    <property type="project" value="UniProtKB-KW"/>
</dbReference>
<dbReference type="GO" id="GO:0046872">
    <property type="term" value="F:metal ion binding"/>
    <property type="evidence" value="ECO:0007669"/>
    <property type="project" value="UniProtKB-KW"/>
</dbReference>
<dbReference type="GO" id="GO:0008081">
    <property type="term" value="F:phosphoric diester hydrolase activity"/>
    <property type="evidence" value="ECO:0007669"/>
    <property type="project" value="InterPro"/>
</dbReference>
<dbReference type="GO" id="GO:0090729">
    <property type="term" value="F:toxin activity"/>
    <property type="evidence" value="ECO:0007669"/>
    <property type="project" value="UniProtKB-KW"/>
</dbReference>
<dbReference type="GO" id="GO:0031640">
    <property type="term" value="P:killing of cells of another organism"/>
    <property type="evidence" value="ECO:0007669"/>
    <property type="project" value="UniProtKB-KW"/>
</dbReference>
<dbReference type="GO" id="GO:0016042">
    <property type="term" value="P:lipid catabolic process"/>
    <property type="evidence" value="ECO:0007669"/>
    <property type="project" value="UniProtKB-KW"/>
</dbReference>
<dbReference type="CDD" id="cd08576">
    <property type="entry name" value="GDPD_like_SMaseD_PLD"/>
    <property type="match status" value="1"/>
</dbReference>
<dbReference type="Gene3D" id="3.20.20.190">
    <property type="entry name" value="Phosphatidylinositol (PI) phosphodiesterase"/>
    <property type="match status" value="1"/>
</dbReference>
<dbReference type="InterPro" id="IPR017946">
    <property type="entry name" value="PLC-like_Pdiesterase_TIM-brl"/>
</dbReference>
<dbReference type="Pfam" id="PF13653">
    <property type="entry name" value="GDPD_2"/>
    <property type="match status" value="1"/>
</dbReference>
<dbReference type="SUPFAM" id="SSF51695">
    <property type="entry name" value="PLC-like phosphodiesterases"/>
    <property type="match status" value="1"/>
</dbReference>
<feature type="chain" id="PRO_0000392785" description="Dermonecrotic toxin LapSicTox-alphaIB1b2">
    <location>
        <begin position="1" status="less than"/>
        <end position="273"/>
    </location>
</feature>
<feature type="active site" evidence="5">
    <location>
        <position position="5"/>
    </location>
</feature>
<feature type="active site" description="Nucleophile" evidence="5">
    <location>
        <position position="41"/>
    </location>
</feature>
<feature type="binding site" evidence="5">
    <location>
        <position position="25"/>
    </location>
    <ligand>
        <name>Mg(2+)</name>
        <dbReference type="ChEBI" id="CHEBI:18420"/>
    </ligand>
</feature>
<feature type="binding site" evidence="5">
    <location>
        <position position="27"/>
    </location>
    <ligand>
        <name>Mg(2+)</name>
        <dbReference type="ChEBI" id="CHEBI:18420"/>
    </ligand>
</feature>
<feature type="binding site" evidence="5">
    <location>
        <position position="85"/>
    </location>
    <ligand>
        <name>Mg(2+)</name>
        <dbReference type="ChEBI" id="CHEBI:18420"/>
    </ligand>
</feature>
<feature type="glycosylation site" description="N-linked (GlcNAc...) asparagine" evidence="6">
    <location>
        <position position="250"/>
    </location>
</feature>
<feature type="disulfide bond" evidence="3">
    <location>
        <begin position="45"/>
        <end position="51"/>
    </location>
</feature>
<feature type="disulfide bond" evidence="3">
    <location>
        <begin position="47"/>
        <end position="190"/>
    </location>
</feature>
<feature type="non-terminal residue">
    <location>
        <position position="1"/>
    </location>
</feature>
<name>A1KB2_LOXAP</name>
<accession>C0JAV9</accession>